<feature type="chain" id="PRO_1000140976" description="Small ribosomal subunit protein uS3">
    <location>
        <begin position="1"/>
        <end position="234"/>
    </location>
</feature>
<feature type="domain" description="KH type-2" evidence="1">
    <location>
        <begin position="39"/>
        <end position="107"/>
    </location>
</feature>
<proteinExistence type="inferred from homology"/>
<protein>
    <recommendedName>
        <fullName evidence="1">Small ribosomal subunit protein uS3</fullName>
    </recommendedName>
    <alternativeName>
        <fullName evidence="2">30S ribosomal protein S3</fullName>
    </alternativeName>
</protein>
<accession>B6JNF1</accession>
<reference key="1">
    <citation type="submission" date="2008-10" db="EMBL/GenBank/DDBJ databases">
        <title>The complete genome sequence of Helicobacter pylori strain P12.</title>
        <authorList>
            <person name="Fischer W."/>
            <person name="Windhager L."/>
            <person name="Karnholz A."/>
            <person name="Zeiller M."/>
            <person name="Zimmer R."/>
            <person name="Haas R."/>
        </authorList>
    </citation>
    <scope>NUCLEOTIDE SEQUENCE [LARGE SCALE GENOMIC DNA]</scope>
    <source>
        <strain>P12</strain>
    </source>
</reference>
<keyword id="KW-0687">Ribonucleoprotein</keyword>
<keyword id="KW-0689">Ribosomal protein</keyword>
<keyword id="KW-0694">RNA-binding</keyword>
<keyword id="KW-0699">rRNA-binding</keyword>
<gene>
    <name evidence="1" type="primary">rpsC</name>
    <name type="ordered locus">HPP12_1277</name>
</gene>
<comment type="function">
    <text evidence="1">Binds the lower part of the 30S subunit head. Binds mRNA in the 70S ribosome, positioning it for translation.</text>
</comment>
<comment type="subunit">
    <text evidence="1">Part of the 30S ribosomal subunit. Forms a tight complex with proteins S10 and S14.</text>
</comment>
<comment type="similarity">
    <text evidence="1">Belongs to the universal ribosomal protein uS3 family.</text>
</comment>
<sequence>MGQKVNPVGLRLGINRNWTSRWFPSARTAPSNIDEDNKIRKFLKKELYYAGVSEIVIERAAKKLRVTVVAARPGLIIGKKGVDIEKVKEGLKTLIKKEVSINIKEVKRPQADAQLAAENVATQLEKRVAFRRAMKKVMQAALKSGAKGIKVCVSGRLAGAEIARTEWYMEGRVPLHTLRAKIDYGFAEAMTVYGIIGVKVWIFKGEVLQKGIQFEKKEEAKEEREPRRSRRGRQ</sequence>
<organism>
    <name type="scientific">Helicobacter pylori (strain P12)</name>
    <dbReference type="NCBI Taxonomy" id="570508"/>
    <lineage>
        <taxon>Bacteria</taxon>
        <taxon>Pseudomonadati</taxon>
        <taxon>Campylobacterota</taxon>
        <taxon>Epsilonproteobacteria</taxon>
        <taxon>Campylobacterales</taxon>
        <taxon>Helicobacteraceae</taxon>
        <taxon>Helicobacter</taxon>
    </lineage>
</organism>
<name>RS3_HELP2</name>
<dbReference type="EMBL" id="CP001217">
    <property type="protein sequence ID" value="ACJ08429.1"/>
    <property type="molecule type" value="Genomic_DNA"/>
</dbReference>
<dbReference type="SMR" id="B6JNF1"/>
<dbReference type="KEGG" id="hpp:HPP12_1277"/>
<dbReference type="HOGENOM" id="CLU_058591_0_2_7"/>
<dbReference type="Proteomes" id="UP000008198">
    <property type="component" value="Chromosome"/>
</dbReference>
<dbReference type="GO" id="GO:0022627">
    <property type="term" value="C:cytosolic small ribosomal subunit"/>
    <property type="evidence" value="ECO:0007669"/>
    <property type="project" value="TreeGrafter"/>
</dbReference>
<dbReference type="GO" id="GO:0003729">
    <property type="term" value="F:mRNA binding"/>
    <property type="evidence" value="ECO:0007669"/>
    <property type="project" value="UniProtKB-UniRule"/>
</dbReference>
<dbReference type="GO" id="GO:0019843">
    <property type="term" value="F:rRNA binding"/>
    <property type="evidence" value="ECO:0007669"/>
    <property type="project" value="UniProtKB-UniRule"/>
</dbReference>
<dbReference type="GO" id="GO:0003735">
    <property type="term" value="F:structural constituent of ribosome"/>
    <property type="evidence" value="ECO:0007669"/>
    <property type="project" value="InterPro"/>
</dbReference>
<dbReference type="GO" id="GO:0006412">
    <property type="term" value="P:translation"/>
    <property type="evidence" value="ECO:0007669"/>
    <property type="project" value="UniProtKB-UniRule"/>
</dbReference>
<dbReference type="CDD" id="cd02412">
    <property type="entry name" value="KH-II_30S_S3"/>
    <property type="match status" value="1"/>
</dbReference>
<dbReference type="FunFam" id="3.30.1140.32:FF:000006">
    <property type="entry name" value="30S ribosomal protein S3"/>
    <property type="match status" value="1"/>
</dbReference>
<dbReference type="FunFam" id="3.30.300.20:FF:000001">
    <property type="entry name" value="30S ribosomal protein S3"/>
    <property type="match status" value="1"/>
</dbReference>
<dbReference type="Gene3D" id="3.30.300.20">
    <property type="match status" value="1"/>
</dbReference>
<dbReference type="Gene3D" id="3.30.1140.32">
    <property type="entry name" value="Ribosomal protein S3, C-terminal domain"/>
    <property type="match status" value="1"/>
</dbReference>
<dbReference type="HAMAP" id="MF_01309_B">
    <property type="entry name" value="Ribosomal_uS3_B"/>
    <property type="match status" value="1"/>
</dbReference>
<dbReference type="InterPro" id="IPR004087">
    <property type="entry name" value="KH_dom"/>
</dbReference>
<dbReference type="InterPro" id="IPR015946">
    <property type="entry name" value="KH_dom-like_a/b"/>
</dbReference>
<dbReference type="InterPro" id="IPR004044">
    <property type="entry name" value="KH_dom_type_2"/>
</dbReference>
<dbReference type="InterPro" id="IPR009019">
    <property type="entry name" value="KH_sf_prok-type"/>
</dbReference>
<dbReference type="InterPro" id="IPR036419">
    <property type="entry name" value="Ribosomal_S3_C_sf"/>
</dbReference>
<dbReference type="InterPro" id="IPR005704">
    <property type="entry name" value="Ribosomal_uS3_bac-typ"/>
</dbReference>
<dbReference type="InterPro" id="IPR001351">
    <property type="entry name" value="Ribosomal_uS3_C"/>
</dbReference>
<dbReference type="InterPro" id="IPR018280">
    <property type="entry name" value="Ribosomal_uS3_CS"/>
</dbReference>
<dbReference type="NCBIfam" id="TIGR01009">
    <property type="entry name" value="rpsC_bact"/>
    <property type="match status" value="1"/>
</dbReference>
<dbReference type="PANTHER" id="PTHR11760">
    <property type="entry name" value="30S/40S RIBOSOMAL PROTEIN S3"/>
    <property type="match status" value="1"/>
</dbReference>
<dbReference type="PANTHER" id="PTHR11760:SF19">
    <property type="entry name" value="SMALL RIBOSOMAL SUBUNIT PROTEIN US3C"/>
    <property type="match status" value="1"/>
</dbReference>
<dbReference type="Pfam" id="PF07650">
    <property type="entry name" value="KH_2"/>
    <property type="match status" value="1"/>
</dbReference>
<dbReference type="Pfam" id="PF00189">
    <property type="entry name" value="Ribosomal_S3_C"/>
    <property type="match status" value="1"/>
</dbReference>
<dbReference type="SMART" id="SM00322">
    <property type="entry name" value="KH"/>
    <property type="match status" value="1"/>
</dbReference>
<dbReference type="SUPFAM" id="SSF54814">
    <property type="entry name" value="Prokaryotic type KH domain (KH-domain type II)"/>
    <property type="match status" value="1"/>
</dbReference>
<dbReference type="SUPFAM" id="SSF54821">
    <property type="entry name" value="Ribosomal protein S3 C-terminal domain"/>
    <property type="match status" value="1"/>
</dbReference>
<dbReference type="PROSITE" id="PS50823">
    <property type="entry name" value="KH_TYPE_2"/>
    <property type="match status" value="1"/>
</dbReference>
<dbReference type="PROSITE" id="PS00548">
    <property type="entry name" value="RIBOSOMAL_S3"/>
    <property type="match status" value="1"/>
</dbReference>
<evidence type="ECO:0000255" key="1">
    <source>
        <dbReference type="HAMAP-Rule" id="MF_01309"/>
    </source>
</evidence>
<evidence type="ECO:0000305" key="2"/>